<sequence>PAQEAHQVAVAAFREAQVQYLNNQPWQTIKNTLTHNGYRYTNTQCPAADMKIGAQDIFPNAYQGKGVCSSDTTNTQHATNLWMSTLSVNENGKDKTLFCGIRHGVLSPYHVKDPILRQVGAENRAREVLTAALFSQPALLTKALQDEVVSLRLVSVGLLTTSTIVGNEDAMVQDQMRAWQSLTQPGNVIHLNIRNKEGELRTVKIKPEIAAFNTGVNELTLKLGLGHQASDNYNIGALHQLLGHDLRPEAPPGGWVGEWLAQHPDNHAVVNTLVRQIKDIWNSKLHHTDGNEPYKFAQRLAILAHEIGAVPAWNCKSGKDRTGMQDAEIKREVISLHQKATLTPLASLPDSDGQEIFQKVLLNSGNLEIQKQNTGGAGNKVLKNLPPEVLNLSYQRRIGDANIWQLVKGLSSLVTS</sequence>
<accession>Q9AH17</accession>
<feature type="chain" id="PRO_0000220490" description="Inositol phosphate phosphatase SopB">
    <location>
        <begin position="1" status="less than"/>
        <end position="416"/>
    </location>
</feature>
<feature type="short sequence motif" description="CX5R motif">
    <location>
        <begin position="315"/>
        <end position="321"/>
    </location>
</feature>
<feature type="active site" evidence="2">
    <location>
        <position position="315"/>
    </location>
</feature>
<feature type="non-terminal residue">
    <location>
        <position position="1"/>
    </location>
</feature>
<proteinExistence type="inferred from homology"/>
<comment type="function">
    <text evidence="1">Converts phosphatidylinositol 3,4,5-trisphosphate (PtdIns 3,4,5-P3) to PtdIns 3-P and prevents the transition of PtdIns 3-P to PtdIns 3,5-P2. It is one of the known effectors injected by Salmonella into the host cell and is required for invasion and for an efficient generation and maintenance of Salmonella-containing vacuole (SVC). Alteration of the phosphoinositide composition of the plasma membrane causes membrane ruffling and actin cytoskeleton rearrangements. The persistence of PtdIns 3-P diverts the SCV from the endocytic pathway resulting in enlarged vesicles, which are essential to create a favorable environment where Salmonella can replicate and avoid immune defenses of the host cell (By similarity).</text>
</comment>
<comment type="subcellular location">
    <subcellularLocation>
        <location evidence="1">Secreted</location>
    </subcellularLocation>
    <text evidence="1">Secreted via the type III secretion system 1 (SPI-1 T3SS).</text>
</comment>
<comment type="domain">
    <text>Contains the consensus sequence Cys-X(5)-Arg characteristic of Mg-independent phosphatases.</text>
</comment>
<comment type="similarity">
    <text evidence="3">Belongs to the phosphatase IpgD/SopB family.</text>
</comment>
<keyword id="KW-0378">Hydrolase</keyword>
<keyword id="KW-0964">Secreted</keyword>
<keyword id="KW-0843">Virulence</keyword>
<gene>
    <name type="primary">sopB</name>
    <name type="synonym">sigD</name>
</gene>
<evidence type="ECO:0000250" key="1"/>
<evidence type="ECO:0000255" key="2"/>
<evidence type="ECO:0000305" key="3"/>
<dbReference type="EC" id="3.1.3.-"/>
<dbReference type="EMBL" id="AF323079">
    <property type="protein sequence ID" value="AAK27357.1"/>
    <property type="molecule type" value="Genomic_DNA"/>
</dbReference>
<dbReference type="SMR" id="Q9AH17"/>
<dbReference type="STRING" id="218493.SBG_0939"/>
<dbReference type="GO" id="GO:0005576">
    <property type="term" value="C:extracellular region"/>
    <property type="evidence" value="ECO:0007669"/>
    <property type="project" value="UniProtKB-SubCell"/>
</dbReference>
<dbReference type="GO" id="GO:0016791">
    <property type="term" value="F:phosphatase activity"/>
    <property type="evidence" value="ECO:0007669"/>
    <property type="project" value="InterPro"/>
</dbReference>
<dbReference type="Gene3D" id="1.20.58.450">
    <property type="entry name" value="Cell division control protein 42 homolog"/>
    <property type="match status" value="1"/>
</dbReference>
<dbReference type="InterPro" id="IPR008108">
    <property type="entry name" value="IpgD/SopB"/>
</dbReference>
<dbReference type="NCBIfam" id="NF011905">
    <property type="entry name" value="PRK15378.1"/>
    <property type="match status" value="1"/>
</dbReference>
<dbReference type="Pfam" id="PF05925">
    <property type="entry name" value="IpgD"/>
    <property type="match status" value="1"/>
</dbReference>
<dbReference type="PRINTS" id="PR01734">
    <property type="entry name" value="TYPE3OMBPROT"/>
</dbReference>
<organism>
    <name type="scientific">Salmonella bongori</name>
    <dbReference type="NCBI Taxonomy" id="54736"/>
    <lineage>
        <taxon>Bacteria</taxon>
        <taxon>Pseudomonadati</taxon>
        <taxon>Pseudomonadota</taxon>
        <taxon>Gammaproteobacteria</taxon>
        <taxon>Enterobacterales</taxon>
        <taxon>Enterobacteriaceae</taxon>
        <taxon>Salmonella</taxon>
    </lineage>
</organism>
<protein>
    <recommendedName>
        <fullName>Inositol phosphate phosphatase SopB</fullName>
        <ecNumber>3.1.3.-</ecNumber>
    </recommendedName>
    <alternativeName>
        <fullName>Effector protein SopB</fullName>
    </alternativeName>
</protein>
<name>SOPB_SALBN</name>
<reference key="1">
    <citation type="journal article" date="2001" name="J. Bacteriol.">
        <title>Salmonella host cell invasion emerged by acquisition of a mosaic of separate genetic elements, including Salmonella pathogenicity island 1 (SPI1), SPI5, and sopE2.</title>
        <authorList>
            <person name="Mirold S."/>
            <person name="Ehrbar K."/>
            <person name="Weissmueller A."/>
            <person name="Prager R."/>
            <person name="Tschaepe H."/>
            <person name="Ruessmann H."/>
            <person name="Hardt W.-D."/>
        </authorList>
    </citation>
    <scope>NUCLEOTIDE SEQUENCE [GENOMIC DNA]</scope>
    <source>
        <strain>SARC11</strain>
    </source>
</reference>